<comment type="function">
    <text evidence="3 4 5 6 7 8 11 12 14 15">Homeodomain protein that controls neuronal identity (PubMed:1842358). As a transcriptional factor, regulates the expression of ftz, eve and en in a subset of neuroblast progeny and modulates the transcriptional activity of other homeodomain proteins such as Dfd (PubMed:12429095, PubMed:15837198, PubMed:9380747). Required for proper neuronal differentiation, axonal outgrowth and pathfinding of most or all neurons and their precursors in central and peripheral nervous systems (PubMed:11051550, PubMed:1540176, PubMed:16564014, PubMed:1720353, PubMed:18342578, PubMed:1842358, PubMed:20152183, PubMed:23056424, PubMed:27510969). Regulates asymmetric stem cell self-renewal together with brat (PubMed:16564014).</text>
</comment>
<comment type="subcellular location">
    <subcellularLocation>
        <location evidence="5 8 10 11 12 13">Nucleus</location>
    </subcellularLocation>
    <subcellularLocation>
        <location evidence="7 13">Cytoplasm</location>
        <location evidence="7 13">Cell cortex</location>
    </subcellularLocation>
    <subcellularLocation>
        <location evidence="10">Cytoplasm</location>
    </subcellularLocation>
    <text evidence="10">Dispersed in the cytoplasm of mitotic ganglion mother cells (GMCs) and neuroblast-like cell type.</text>
</comment>
<comment type="alternative products">
    <event type="alternative splicing"/>
    <isoform>
        <id>P29617-1</id>
        <name evidence="19">M</name>
        <sequence type="displayed"/>
    </isoform>
    <isoform>
        <id>P29617-2</id>
        <name evidence="19">I</name>
        <sequence type="described" ref="VSP_002307 VSP_002308"/>
    </isoform>
    <isoform>
        <id>P29617-4</id>
        <name evidence="19">H</name>
        <sequence type="described" ref="VSP_002308"/>
    </isoform>
    <isoform>
        <id>P29617-5</id>
        <name evidence="19">J</name>
        <sequence type="described" ref="VSP_059598"/>
    </isoform>
    <isoform>
        <id>P29617-6</id>
        <name evidence="19">L</name>
        <sequence type="described" ref="VSP_059598 VSP_002308"/>
    </isoform>
    <isoform>
        <id>P29617-7</id>
        <name evidence="19">K</name>
        <sequence type="described" ref="VSP_059598 VSP_002307 VSP_002308"/>
    </isoform>
</comment>
<comment type="developmental stage">
    <text evidence="5 8 11 12 14">In embryos, expressed mainly in neuronal precursors but detected also in cells lining the gut and Garland cells (at protein level) (PubMed:1540176, PubMed:1720353, PubMed:20152183, PubMed:27510969). Expressed during embryogenesis in different cells of the central and peripheral nervous system including neuroblasts and ganglion mother cells (GMC) (PubMed:1720353, PubMed:1842358).</text>
</comment>
<comment type="domain">
    <text evidence="1 4 6">The Prospero-type homeodomain and the adjacent Prospero domain act as a single structural unit, the Homeo-Prospero domain.</text>
</comment>
<comment type="disruption phenotype">
    <text evidence="8 11">Embryonic lethal, results in the aberrant expression of the homeobox genes ftz, eve and en in a subset of neuroblasts, and in axonal outgrowth and pathfinding defects in both motoneurons and sensory neurons.</text>
</comment>
<comment type="similarity">
    <text evidence="1">Belongs to the Prospero homeodomain family.</text>
</comment>
<comment type="sequence caution" evidence="18">
    <conflict type="frameshift">
        <sequence resource="EMBL-CDS" id="AAA28841"/>
    </conflict>
</comment>
<comment type="sequence caution" evidence="18">
    <conflict type="erroneous initiation">
        <sequence resource="EMBL-CDS" id="AAL28228"/>
    </conflict>
    <text>Extended N-terminus.</text>
</comment>
<comment type="sequence caution" evidence="18">
    <conflict type="frameshift">
        <sequence resource="EMBL-CDS" id="AAL28228"/>
    </conflict>
</comment>
<comment type="sequence caution" evidence="18">
    <conflict type="erroneous initiation">
        <sequence resource="EMBL-CDS" id="AAT94492"/>
    </conflict>
    <text>Truncated N-terminus.</text>
</comment>
<comment type="sequence caution" evidence="18">
    <conflict type="erroneous initiation">
        <sequence resource="EMBL-CDS" id="BAA01464"/>
    </conflict>
    <text>Truncated N-terminus.</text>
</comment>
<comment type="sequence caution" evidence="18">
    <conflict type="erroneous initiation">
        <sequence resource="EMBL-CDS" id="CAA77802"/>
    </conflict>
    <text>Truncated N-terminus.</text>
</comment>
<keyword id="KW-0002">3D-structure</keyword>
<keyword id="KW-0025">Alternative splicing</keyword>
<keyword id="KW-0963">Cytoplasm</keyword>
<keyword id="KW-0217">Developmental protein</keyword>
<keyword id="KW-0238">DNA-binding</keyword>
<keyword id="KW-0371">Homeobox</keyword>
<keyword id="KW-0539">Nucleus</keyword>
<keyword id="KW-0597">Phosphoprotein</keyword>
<keyword id="KW-1185">Reference proteome</keyword>
<keyword id="KW-0804">Transcription</keyword>
<keyword id="KW-0805">Transcription regulation</keyword>
<feature type="chain" id="PRO_0000208884" description="Homeobox protein prospero">
    <location>
        <begin position="1"/>
        <end position="1703"/>
    </location>
</feature>
<feature type="domain" description="Prospero-type homeo" evidence="1">
    <location>
        <begin position="1545"/>
        <end position="1603"/>
    </location>
</feature>
<feature type="domain" description="Prospero" evidence="1">
    <location>
        <begin position="1604"/>
        <end position="1703"/>
    </location>
</feature>
<feature type="region of interest" description="Disordered" evidence="2">
    <location>
        <begin position="23"/>
        <end position="292"/>
    </location>
</feature>
<feature type="region of interest" description="Disordered" evidence="2">
    <location>
        <begin position="322"/>
        <end position="357"/>
    </location>
</feature>
<feature type="region of interest" description="Disordered" evidence="2">
    <location>
        <begin position="437"/>
        <end position="521"/>
    </location>
</feature>
<feature type="region of interest" description="Disordered" evidence="2">
    <location>
        <begin position="608"/>
        <end position="692"/>
    </location>
</feature>
<feature type="region of interest" description="Disordered" evidence="2">
    <location>
        <begin position="732"/>
        <end position="751"/>
    </location>
</feature>
<feature type="region of interest" description="Disordered" evidence="2">
    <location>
        <begin position="823"/>
        <end position="844"/>
    </location>
</feature>
<feature type="region of interest" description="Disordered" evidence="2">
    <location>
        <begin position="875"/>
        <end position="951"/>
    </location>
</feature>
<feature type="region of interest" description="Disordered" evidence="2">
    <location>
        <begin position="1040"/>
        <end position="1101"/>
    </location>
</feature>
<feature type="region of interest" description="Disordered" evidence="2">
    <location>
        <begin position="1197"/>
        <end position="1217"/>
    </location>
</feature>
<feature type="region of interest" description="Disordered" evidence="2">
    <location>
        <begin position="1245"/>
        <end position="1389"/>
    </location>
</feature>
<feature type="region of interest" description="Disordered" evidence="2">
    <location>
        <begin position="1418"/>
        <end position="1469"/>
    </location>
</feature>
<feature type="region of interest" description="Homeo-Prospero" evidence="1">
    <location>
        <begin position="1545"/>
        <end position="1703"/>
    </location>
</feature>
<feature type="short sequence motif" description="Nuclear localization signal">
    <location>
        <begin position="1291"/>
        <end position="1298"/>
    </location>
</feature>
<feature type="compositionally biased region" description="Low complexity" evidence="2">
    <location>
        <begin position="36"/>
        <end position="53"/>
    </location>
</feature>
<feature type="compositionally biased region" description="Polar residues" evidence="2">
    <location>
        <begin position="66"/>
        <end position="79"/>
    </location>
</feature>
<feature type="compositionally biased region" description="Low complexity" evidence="2">
    <location>
        <begin position="92"/>
        <end position="109"/>
    </location>
</feature>
<feature type="compositionally biased region" description="Basic and acidic residues" evidence="2">
    <location>
        <begin position="110"/>
        <end position="126"/>
    </location>
</feature>
<feature type="compositionally biased region" description="Acidic residues" evidence="2">
    <location>
        <begin position="127"/>
        <end position="136"/>
    </location>
</feature>
<feature type="compositionally biased region" description="Low complexity" evidence="2">
    <location>
        <begin position="137"/>
        <end position="188"/>
    </location>
</feature>
<feature type="compositionally biased region" description="Low complexity" evidence="2">
    <location>
        <begin position="196"/>
        <end position="255"/>
    </location>
</feature>
<feature type="compositionally biased region" description="Low complexity" evidence="2">
    <location>
        <begin position="274"/>
        <end position="292"/>
    </location>
</feature>
<feature type="compositionally biased region" description="Low complexity" evidence="2">
    <location>
        <begin position="327"/>
        <end position="337"/>
    </location>
</feature>
<feature type="compositionally biased region" description="Low complexity" evidence="2">
    <location>
        <begin position="346"/>
        <end position="357"/>
    </location>
</feature>
<feature type="compositionally biased region" description="Polar residues" evidence="2">
    <location>
        <begin position="437"/>
        <end position="452"/>
    </location>
</feature>
<feature type="compositionally biased region" description="Low complexity" evidence="2">
    <location>
        <begin position="453"/>
        <end position="472"/>
    </location>
</feature>
<feature type="compositionally biased region" description="Polar residues" evidence="2">
    <location>
        <begin position="503"/>
        <end position="521"/>
    </location>
</feature>
<feature type="compositionally biased region" description="Polar residues" evidence="2">
    <location>
        <begin position="608"/>
        <end position="617"/>
    </location>
</feature>
<feature type="compositionally biased region" description="Low complexity" evidence="2">
    <location>
        <begin position="618"/>
        <end position="642"/>
    </location>
</feature>
<feature type="compositionally biased region" description="Basic and acidic residues" evidence="2">
    <location>
        <begin position="643"/>
        <end position="658"/>
    </location>
</feature>
<feature type="compositionally biased region" description="Basic and acidic residues" evidence="2">
    <location>
        <begin position="674"/>
        <end position="691"/>
    </location>
</feature>
<feature type="compositionally biased region" description="Acidic residues" evidence="2">
    <location>
        <begin position="875"/>
        <end position="892"/>
    </location>
</feature>
<feature type="compositionally biased region" description="Low complexity" evidence="2">
    <location>
        <begin position="927"/>
        <end position="944"/>
    </location>
</feature>
<feature type="compositionally biased region" description="Basic and acidic residues" evidence="2">
    <location>
        <begin position="1040"/>
        <end position="1054"/>
    </location>
</feature>
<feature type="compositionally biased region" description="Low complexity" evidence="2">
    <location>
        <begin position="1055"/>
        <end position="1076"/>
    </location>
</feature>
<feature type="compositionally biased region" description="Polar residues" evidence="2">
    <location>
        <begin position="1208"/>
        <end position="1217"/>
    </location>
</feature>
<feature type="compositionally biased region" description="Low complexity" evidence="2">
    <location>
        <begin position="1252"/>
        <end position="1278"/>
    </location>
</feature>
<feature type="compositionally biased region" description="Low complexity" evidence="2">
    <location>
        <begin position="1328"/>
        <end position="1348"/>
    </location>
</feature>
<feature type="compositionally biased region" description="Polar residues" evidence="2">
    <location>
        <begin position="1349"/>
        <end position="1367"/>
    </location>
</feature>
<feature type="compositionally biased region" description="Pro residues" evidence="2">
    <location>
        <begin position="1374"/>
        <end position="1384"/>
    </location>
</feature>
<feature type="compositionally biased region" description="Basic residues" evidence="2">
    <location>
        <begin position="1427"/>
        <end position="1437"/>
    </location>
</feature>
<feature type="compositionally biased region" description="Low complexity" evidence="2">
    <location>
        <begin position="1438"/>
        <end position="1451"/>
    </location>
</feature>
<feature type="site" description="Interaction with DNA" evidence="4 6 20 21">
    <location>
        <position position="1582"/>
    </location>
</feature>
<feature type="site" description="Interaction with DNA" evidence="4 6 20 21">
    <location>
        <position position="1587"/>
    </location>
</feature>
<feature type="site" description="Interaction with DNA" evidence="4 6 20 21">
    <location>
        <position position="1590"/>
    </location>
</feature>
<feature type="site" description="Interaction with DNA" evidence="4 6 20 21">
    <location>
        <position position="1591"/>
    </location>
</feature>
<feature type="site" description="Interaction with DNA" evidence="4 6 20 21">
    <location>
        <position position="1594"/>
    </location>
</feature>
<feature type="site" description="Interaction with DNA" evidence="4 6 20 21">
    <location>
        <position position="1597"/>
    </location>
</feature>
<feature type="site" description="Interaction with DNA" evidence="4 6 20 21">
    <location>
        <position position="1676"/>
    </location>
</feature>
<feature type="modified residue" description="Phosphoserine" evidence="9">
    <location>
        <position position="479"/>
    </location>
</feature>
<feature type="modified residue" description="Phosphoserine" evidence="9">
    <location>
        <position position="482"/>
    </location>
</feature>
<feature type="modified residue" description="Phosphoserine" evidence="9">
    <location>
        <position position="485"/>
    </location>
</feature>
<feature type="modified residue" description="Phosphoserine" evidence="9">
    <location>
        <position position="497"/>
    </location>
</feature>
<feature type="modified residue" description="Phosphoserine" evidence="9">
    <location>
        <position position="651"/>
    </location>
</feature>
<feature type="modified residue" description="Phosphoserine" evidence="9">
    <location>
        <position position="654"/>
    </location>
</feature>
<feature type="splice variant" id="VSP_059598" description="In isoform J, isoform L and isoform K." evidence="18">
    <location>
        <begin position="1"/>
        <end position="300"/>
    </location>
</feature>
<feature type="splice variant" id="VSP_002307" description="In isoform I and isoform K." evidence="16">
    <original>S</original>
    <variation>SGNNGSLLLANSQMPSQTTASGSSAQQQQQQNAQQQHQGSQQQQQQNVVQQQNVAQQQHMQQQQQQQQSHPLLPPNCQQLISAPRLNGSQLSFASPAAAAAAAMGLQMHHAAAAAAMSAQQQQQQSGDPGANTNPNSGPANPTNSSLSTLNIPPPHIRPSPT</variation>
    <location>
        <position position="1216"/>
    </location>
</feature>
<feature type="splice variant" id="VSP_002308" description="In isoform I, isoform H, isoform L and isoform K." evidence="16 17">
    <location>
        <begin position="1516"/>
        <end position="1544"/>
    </location>
</feature>
<feature type="sequence conflict" description="In Ref. 1; AAA28841." evidence="18" ref="1">
    <original>QQQQQQHHH</original>
    <variation>HHQ</variation>
    <location>
        <begin position="49"/>
        <end position="57"/>
    </location>
</feature>
<feature type="sequence conflict" description="In Ref. 1; AAA28841." evidence="18" ref="1">
    <original>ANEEESEDSDDD</original>
    <variation>RTKRSPRIPTTT</variation>
    <location>
        <begin position="124"/>
        <end position="135"/>
    </location>
</feature>
<feature type="sequence conflict" description="In Ref. 1; AAA28841." evidence="18" ref="1">
    <original>A</original>
    <variation>G</variation>
    <location>
        <position position="175"/>
    </location>
</feature>
<feature type="sequence conflict" description="In Ref. 1; AAA28841." evidence="18" ref="1">
    <original>S</original>
    <variation>L</variation>
    <location>
        <position position="230"/>
    </location>
</feature>
<feature type="sequence conflict" description="In Ref. 1; AAA28841." evidence="18" ref="1">
    <original>S</original>
    <variation>R</variation>
    <location>
        <position position="283"/>
    </location>
</feature>
<feature type="sequence conflict" description="In Ref. 1; AAA28841." evidence="18" ref="1">
    <original>A</original>
    <variation>R</variation>
    <location>
        <position position="293"/>
    </location>
</feature>
<feature type="sequence conflict" description="In Ref. 1; AAA28841 and 7; AAF05703." evidence="18" ref="1 7">
    <original>AKMLNELFGRQMKQAQDATSGLP</original>
    <variation>GQDAERAVWPPDEAGPGRNEWPA</variation>
    <location>
        <begin position="376"/>
        <end position="398"/>
    </location>
</feature>
<feature type="sequence conflict" description="In Ref. 1; AAA28841 and 7; AAF05703." evidence="18" ref="1 7">
    <original>IGSLNSTSKLLQQQHNNNSIAPANS</original>
    <variation>NLALQFHVQVAAAAAITTALLPPIG</variation>
    <location>
        <begin position="420"/>
        <end position="444"/>
    </location>
</feature>
<feature type="sequence conflict" description="In Ref. 5; BAA01464." evidence="18" ref="5">
    <original>H</original>
    <variation>Q</variation>
    <location>
        <position position="718"/>
    </location>
</feature>
<feature type="sequence conflict" description="In Ref. 1; AAA28841." evidence="18" ref="1">
    <original>A</original>
    <variation>C</variation>
    <location>
        <position position="977"/>
    </location>
</feature>
<feature type="sequence conflict" description="In Ref. 1; AAA28841." evidence="18" ref="1">
    <original>A</original>
    <variation>S</variation>
    <location>
        <position position="1102"/>
    </location>
</feature>
<feature type="sequence conflict" description="In Ref. 1; AAA28841." evidence="18" ref="1">
    <original>T</original>
    <variation>S</variation>
    <location>
        <position position="1258"/>
    </location>
</feature>
<feature type="sequence conflict" description="In Ref. 1; AAA28841." evidence="18" ref="1">
    <original>Q</original>
    <variation>QQQQQ</variation>
    <location>
        <position position="1348"/>
    </location>
</feature>
<feature type="helix" evidence="22">
    <location>
        <begin position="1550"/>
        <end position="1559"/>
    </location>
</feature>
<feature type="turn" evidence="22">
    <location>
        <begin position="1560"/>
        <end position="1562"/>
    </location>
</feature>
<feature type="helix" evidence="22">
    <location>
        <begin position="1568"/>
        <end position="1574"/>
    </location>
</feature>
<feature type="helix" evidence="22">
    <location>
        <begin position="1582"/>
        <end position="1612"/>
    </location>
</feature>
<feature type="helix" evidence="22">
    <location>
        <begin position="1628"/>
        <end position="1637"/>
    </location>
</feature>
<feature type="helix" evidence="22">
    <location>
        <begin position="1647"/>
        <end position="1665"/>
    </location>
</feature>
<feature type="helix" evidence="22">
    <location>
        <begin position="1668"/>
        <end position="1670"/>
    </location>
</feature>
<feature type="turn" evidence="22">
    <location>
        <begin position="1672"/>
        <end position="1675"/>
    </location>
</feature>
<feature type="helix" evidence="22">
    <location>
        <begin position="1676"/>
        <end position="1683"/>
    </location>
</feature>
<feature type="helix" evidence="22">
    <location>
        <begin position="1691"/>
        <end position="1694"/>
    </location>
</feature>
<feature type="helix" evidence="23">
    <location>
        <begin position="1696"/>
        <end position="1699"/>
    </location>
</feature>
<evidence type="ECO:0000255" key="1">
    <source>
        <dbReference type="PROSITE-ProRule" id="PRU01162"/>
    </source>
</evidence>
<evidence type="ECO:0000256" key="2">
    <source>
        <dbReference type="SAM" id="MobiDB-lite"/>
    </source>
</evidence>
<evidence type="ECO:0000269" key="3">
    <source>
    </source>
</evidence>
<evidence type="ECO:0000269" key="4">
    <source>
    </source>
</evidence>
<evidence type="ECO:0000269" key="5">
    <source>
    </source>
</evidence>
<evidence type="ECO:0000269" key="6">
    <source>
    </source>
</evidence>
<evidence type="ECO:0000269" key="7">
    <source>
    </source>
</evidence>
<evidence type="ECO:0000269" key="8">
    <source>
    </source>
</evidence>
<evidence type="ECO:0000269" key="9">
    <source>
    </source>
</evidence>
<evidence type="ECO:0000269" key="10">
    <source>
    </source>
</evidence>
<evidence type="ECO:0000269" key="11">
    <source>
    </source>
</evidence>
<evidence type="ECO:0000269" key="12">
    <source>
    </source>
</evidence>
<evidence type="ECO:0000269" key="13">
    <source>
    </source>
</evidence>
<evidence type="ECO:0000269" key="14">
    <source>
    </source>
</evidence>
<evidence type="ECO:0000269" key="15">
    <source>
    </source>
</evidence>
<evidence type="ECO:0000303" key="16">
    <source>
    </source>
</evidence>
<evidence type="ECO:0000303" key="17">
    <source ref="6"/>
</evidence>
<evidence type="ECO:0000305" key="18"/>
<evidence type="ECO:0000312" key="19">
    <source>
        <dbReference type="FlyBase" id="FBgn0004595"/>
    </source>
</evidence>
<evidence type="ECO:0007744" key="20">
    <source>
        <dbReference type="PDB" id="1MIJ"/>
    </source>
</evidence>
<evidence type="ECO:0007744" key="21">
    <source>
        <dbReference type="PDB" id="1XPX"/>
    </source>
</evidence>
<evidence type="ECO:0007829" key="22">
    <source>
        <dbReference type="PDB" id="1MIJ"/>
    </source>
</evidence>
<evidence type="ECO:0007829" key="23">
    <source>
        <dbReference type="PDB" id="1XPX"/>
    </source>
</evidence>
<dbReference type="EMBL" id="M81389">
    <property type="protein sequence ID" value="AAA28841.1"/>
    <property type="status" value="ALT_FRAME"/>
    <property type="molecule type" value="mRNA"/>
</dbReference>
<dbReference type="EMBL" id="AE014297">
    <property type="protein sequence ID" value="AAF54628.3"/>
    <property type="molecule type" value="Genomic_DNA"/>
</dbReference>
<dbReference type="EMBL" id="AE014297">
    <property type="protein sequence ID" value="AAN13500.3"/>
    <property type="molecule type" value="Genomic_DNA"/>
</dbReference>
<dbReference type="EMBL" id="AE014297">
    <property type="protein sequence ID" value="AAN13501.3"/>
    <property type="molecule type" value="Genomic_DNA"/>
</dbReference>
<dbReference type="EMBL" id="AE014297">
    <property type="protein sequence ID" value="AFH06364.1"/>
    <property type="molecule type" value="Genomic_DNA"/>
</dbReference>
<dbReference type="EMBL" id="Z11743">
    <property type="protein sequence ID" value="CAA77802.1"/>
    <property type="status" value="ALT_INIT"/>
    <property type="molecule type" value="mRNA"/>
</dbReference>
<dbReference type="EMBL" id="D10609">
    <property type="protein sequence ID" value="BAA01464.1"/>
    <property type="status" value="ALT_INIT"/>
    <property type="molecule type" value="mRNA"/>
</dbReference>
<dbReference type="EMBL" id="BT015263">
    <property type="protein sequence ID" value="AAT94492.1"/>
    <property type="status" value="ALT_INIT"/>
    <property type="molecule type" value="mRNA"/>
</dbReference>
<dbReference type="EMBL" id="AF190403">
    <property type="protein sequence ID" value="AAF05703.1"/>
    <property type="molecule type" value="Genomic_DNA"/>
</dbReference>
<dbReference type="EMBL" id="AY060680">
    <property type="protein sequence ID" value="AAL28228.1"/>
    <property type="status" value="ALT_SEQ"/>
    <property type="molecule type" value="mRNA"/>
</dbReference>
<dbReference type="PIR" id="S24548">
    <property type="entry name" value="S24548"/>
</dbReference>
<dbReference type="RefSeq" id="NP_001247044.1">
    <molecule id="P29617-4"/>
    <property type="nucleotide sequence ID" value="NM_001260115.2"/>
</dbReference>
<dbReference type="RefSeq" id="NP_001247045.1">
    <molecule id="P29617-2"/>
    <property type="nucleotide sequence ID" value="NM_001260116.2"/>
</dbReference>
<dbReference type="RefSeq" id="NP_001247046.1">
    <molecule id="P29617-1"/>
    <property type="nucleotide sequence ID" value="NM_001260117.2"/>
</dbReference>
<dbReference type="RefSeq" id="NP_524317.4">
    <molecule id="P29617-5"/>
    <property type="nucleotide sequence ID" value="NM_079593.6"/>
</dbReference>
<dbReference type="RefSeq" id="NP_731565.4">
    <molecule id="P29617-7"/>
    <property type="nucleotide sequence ID" value="NM_169386.3"/>
</dbReference>
<dbReference type="RefSeq" id="NP_788636.3">
    <molecule id="P29617-6"/>
    <property type="nucleotide sequence ID" value="NM_176459.4"/>
</dbReference>
<dbReference type="PDB" id="1MIJ">
    <property type="method" value="X-ray"/>
    <property type="resolution" value="2.05 A"/>
    <property type="chains" value="A=1545-1696"/>
</dbReference>
<dbReference type="PDB" id="1XPX">
    <property type="method" value="X-ray"/>
    <property type="resolution" value="2.80 A"/>
    <property type="chains" value="A=1541-1703"/>
</dbReference>
<dbReference type="PDBsum" id="1MIJ"/>
<dbReference type="PDBsum" id="1XPX"/>
<dbReference type="SMR" id="P29617"/>
<dbReference type="BioGRID" id="66496">
    <property type="interactions" value="35"/>
</dbReference>
<dbReference type="FunCoup" id="P29617">
    <property type="interactions" value="100"/>
</dbReference>
<dbReference type="IntAct" id="P29617">
    <property type="interactions" value="6"/>
</dbReference>
<dbReference type="STRING" id="7227.FBpp0293146"/>
<dbReference type="GlyGen" id="P29617">
    <property type="glycosylation" value="4 sites"/>
</dbReference>
<dbReference type="iPTMnet" id="P29617"/>
<dbReference type="EnsemblMetazoa" id="FBtr0304603">
    <molecule id="P29617-4"/>
    <property type="protein sequence ID" value="FBpp0293145"/>
    <property type="gene ID" value="FBgn0004595"/>
</dbReference>
<dbReference type="EnsemblMetazoa" id="FBtr0304604">
    <molecule id="P29617-2"/>
    <property type="protein sequence ID" value="FBpp0293146"/>
    <property type="gene ID" value="FBgn0004595"/>
</dbReference>
<dbReference type="EnsemblMetazoa" id="FBtr0304605">
    <molecule id="P29617-5"/>
    <property type="protein sequence ID" value="FBpp0293147"/>
    <property type="gene ID" value="FBgn0004595"/>
</dbReference>
<dbReference type="EnsemblMetazoa" id="FBtr0304606">
    <molecule id="P29617-7"/>
    <property type="protein sequence ID" value="FBpp0293148"/>
    <property type="gene ID" value="FBgn0004595"/>
</dbReference>
<dbReference type="EnsemblMetazoa" id="FBtr0304607">
    <molecule id="P29617-6"/>
    <property type="protein sequence ID" value="FBpp0293149"/>
    <property type="gene ID" value="FBgn0004595"/>
</dbReference>
<dbReference type="EnsemblMetazoa" id="FBtr0304608">
    <molecule id="P29617-1"/>
    <property type="protein sequence ID" value="FBpp0293150"/>
    <property type="gene ID" value="FBgn0004595"/>
</dbReference>
<dbReference type="GeneID" id="41363"/>
<dbReference type="KEGG" id="dme:Dmel_CG17228"/>
<dbReference type="AGR" id="FB:FBgn0004595"/>
<dbReference type="CTD" id="41363"/>
<dbReference type="FlyBase" id="FBgn0004595">
    <property type="gene designation" value="pros"/>
</dbReference>
<dbReference type="VEuPathDB" id="VectorBase:FBgn0004595"/>
<dbReference type="eggNOG" id="KOG3779">
    <property type="taxonomic scope" value="Eukaryota"/>
</dbReference>
<dbReference type="GeneTree" id="ENSGT00940000154790"/>
<dbReference type="InParanoid" id="P29617"/>
<dbReference type="OMA" id="QLPNCQQ"/>
<dbReference type="OrthoDB" id="10038576at2759"/>
<dbReference type="SignaLink" id="P29617"/>
<dbReference type="BioGRID-ORCS" id="41363">
    <property type="hits" value="0 hits in 3 CRISPR screens"/>
</dbReference>
<dbReference type="CD-CODE" id="E9C70067">
    <property type="entry name" value="Synthetic Condensate 000299"/>
</dbReference>
<dbReference type="ChiTaRS" id="pros">
    <property type="organism name" value="fly"/>
</dbReference>
<dbReference type="EvolutionaryTrace" id="P29617"/>
<dbReference type="GenomeRNAi" id="41363"/>
<dbReference type="PRO" id="PR:P29617"/>
<dbReference type="Proteomes" id="UP000000803">
    <property type="component" value="Chromosome 3R"/>
</dbReference>
<dbReference type="Bgee" id="FBgn0004595">
    <property type="expression patterns" value="Expressed in alpha'/beta' Kenyon cell (Drosophila) in insect head and 279 other cell types or tissues"/>
</dbReference>
<dbReference type="ExpressionAtlas" id="P29617">
    <property type="expression patterns" value="baseline and differential"/>
</dbReference>
<dbReference type="GO" id="GO:0045179">
    <property type="term" value="C:apical cortex"/>
    <property type="evidence" value="ECO:0000314"/>
    <property type="project" value="FlyBase"/>
</dbReference>
<dbReference type="GO" id="GO:0045180">
    <property type="term" value="C:basal cortex"/>
    <property type="evidence" value="ECO:0000314"/>
    <property type="project" value="FlyBase"/>
</dbReference>
<dbReference type="GO" id="GO:0005938">
    <property type="term" value="C:cell cortex"/>
    <property type="evidence" value="ECO:0000314"/>
    <property type="project" value="FlyBase"/>
</dbReference>
<dbReference type="GO" id="GO:0005634">
    <property type="term" value="C:nucleus"/>
    <property type="evidence" value="ECO:0000314"/>
    <property type="project" value="UniProtKB"/>
</dbReference>
<dbReference type="GO" id="GO:0005886">
    <property type="term" value="C:plasma membrane"/>
    <property type="evidence" value="ECO:0000314"/>
    <property type="project" value="FlyBase"/>
</dbReference>
<dbReference type="GO" id="GO:0003677">
    <property type="term" value="F:DNA binding"/>
    <property type="evidence" value="ECO:0000314"/>
    <property type="project" value="FlyBase"/>
</dbReference>
<dbReference type="GO" id="GO:0003700">
    <property type="term" value="F:DNA-binding transcription factor activity"/>
    <property type="evidence" value="ECO:0000315"/>
    <property type="project" value="FlyBase"/>
</dbReference>
<dbReference type="GO" id="GO:0000981">
    <property type="term" value="F:DNA-binding transcription factor activity, RNA polymerase II-specific"/>
    <property type="evidence" value="ECO:0000318"/>
    <property type="project" value="GO_Central"/>
</dbReference>
<dbReference type="GO" id="GO:0001227">
    <property type="term" value="F:DNA-binding transcription repressor activity, RNA polymerase II-specific"/>
    <property type="evidence" value="ECO:0000315"/>
    <property type="project" value="FlyBase"/>
</dbReference>
<dbReference type="GO" id="GO:0000978">
    <property type="term" value="F:RNA polymerase II cis-regulatory region sequence-specific DNA binding"/>
    <property type="evidence" value="ECO:0000318"/>
    <property type="project" value="GO_Central"/>
</dbReference>
<dbReference type="GO" id="GO:0043565">
    <property type="term" value="F:sequence-specific DNA binding"/>
    <property type="evidence" value="ECO:0000314"/>
    <property type="project" value="UniProtKB"/>
</dbReference>
<dbReference type="GO" id="GO:0055059">
    <property type="term" value="P:asymmetric neuroblast division"/>
    <property type="evidence" value="ECO:0000315"/>
    <property type="project" value="FlyBase"/>
</dbReference>
<dbReference type="GO" id="GO:0055060">
    <property type="term" value="P:asymmetric neuroblast division resulting in ganglion mother cell formation"/>
    <property type="evidence" value="ECO:0000315"/>
    <property type="project" value="FlyBase"/>
</dbReference>
<dbReference type="GO" id="GO:0061564">
    <property type="term" value="P:axon development"/>
    <property type="evidence" value="ECO:0000315"/>
    <property type="project" value="UniProtKB"/>
</dbReference>
<dbReference type="GO" id="GO:0007411">
    <property type="term" value="P:axon guidance"/>
    <property type="evidence" value="ECO:0000315"/>
    <property type="project" value="FlyBase"/>
</dbReference>
<dbReference type="GO" id="GO:0007409">
    <property type="term" value="P:axonogenesis"/>
    <property type="evidence" value="ECO:0000315"/>
    <property type="project" value="FlyBase"/>
</dbReference>
<dbReference type="GO" id="GO:0060385">
    <property type="term" value="P:axonogenesis involved in innervation"/>
    <property type="evidence" value="ECO:0000315"/>
    <property type="project" value="FlyBase"/>
</dbReference>
<dbReference type="GO" id="GO:0007420">
    <property type="term" value="P:brain development"/>
    <property type="evidence" value="ECO:0000315"/>
    <property type="project" value="FlyBase"/>
</dbReference>
<dbReference type="GO" id="GO:0043697">
    <property type="term" value="P:cell dedifferentiation"/>
    <property type="evidence" value="ECO:0000316"/>
    <property type="project" value="UniProtKB"/>
</dbReference>
<dbReference type="GO" id="GO:0045165">
    <property type="term" value="P:cell fate commitment"/>
    <property type="evidence" value="ECO:0000315"/>
    <property type="project" value="FlyBase"/>
</dbReference>
<dbReference type="GO" id="GO:0007417">
    <property type="term" value="P:central nervous system development"/>
    <property type="evidence" value="ECO:0000315"/>
    <property type="project" value="UniProtKB"/>
</dbReference>
<dbReference type="GO" id="GO:0070983">
    <property type="term" value="P:dendrite guidance"/>
    <property type="evidence" value="ECO:0000315"/>
    <property type="project" value="FlyBase"/>
</dbReference>
<dbReference type="GO" id="GO:0048813">
    <property type="term" value="P:dendrite morphogenesis"/>
    <property type="evidence" value="ECO:0000315"/>
    <property type="project" value="FlyBase"/>
</dbReference>
<dbReference type="GO" id="GO:0070314">
    <property type="term" value="P:G1 to G0 transition"/>
    <property type="evidence" value="ECO:0000315"/>
    <property type="project" value="FlyBase"/>
</dbReference>
<dbReference type="GO" id="GO:0007402">
    <property type="term" value="P:ganglion mother cell fate determination"/>
    <property type="evidence" value="ECO:0000315"/>
    <property type="project" value="FlyBase"/>
</dbReference>
<dbReference type="GO" id="GO:0010001">
    <property type="term" value="P:glial cell differentiation"/>
    <property type="evidence" value="ECO:0000315"/>
    <property type="project" value="FlyBase"/>
</dbReference>
<dbReference type="GO" id="GO:0008049">
    <property type="term" value="P:male courtship behavior"/>
    <property type="evidence" value="ECO:0000315"/>
    <property type="project" value="FlyBase"/>
</dbReference>
<dbReference type="GO" id="GO:0050771">
    <property type="term" value="P:negative regulation of axonogenesis"/>
    <property type="evidence" value="ECO:0000315"/>
    <property type="project" value="FlyBase"/>
</dbReference>
<dbReference type="GO" id="GO:0008285">
    <property type="term" value="P:negative regulation of cell population proliferation"/>
    <property type="evidence" value="ECO:0000315"/>
    <property type="project" value="FlyBase"/>
</dbReference>
<dbReference type="GO" id="GO:0010629">
    <property type="term" value="P:negative regulation of gene expression"/>
    <property type="evidence" value="ECO:0000315"/>
    <property type="project" value="FlyBase"/>
</dbReference>
<dbReference type="GO" id="GO:0007406">
    <property type="term" value="P:negative regulation of neuroblast proliferation"/>
    <property type="evidence" value="ECO:0000315"/>
    <property type="project" value="FlyBase"/>
</dbReference>
<dbReference type="GO" id="GO:0000122">
    <property type="term" value="P:negative regulation of transcription by RNA polymerase II"/>
    <property type="evidence" value="ECO:0000315"/>
    <property type="project" value="FlyBase"/>
</dbReference>
<dbReference type="GO" id="GO:0014016">
    <property type="term" value="P:neuroblast differentiation"/>
    <property type="evidence" value="ECO:0000315"/>
    <property type="project" value="UniProtKB"/>
</dbReference>
<dbReference type="GO" id="GO:0007405">
    <property type="term" value="P:neuroblast proliferation"/>
    <property type="evidence" value="ECO:0000315"/>
    <property type="project" value="FlyBase"/>
</dbReference>
<dbReference type="GO" id="GO:0007422">
    <property type="term" value="P:peripheral nervous system development"/>
    <property type="evidence" value="ECO:0000315"/>
    <property type="project" value="UniProtKB"/>
</dbReference>
<dbReference type="GO" id="GO:0010628">
    <property type="term" value="P:positive regulation of gene expression"/>
    <property type="evidence" value="ECO:0000315"/>
    <property type="project" value="FlyBase"/>
</dbReference>
<dbReference type="GO" id="GO:0002052">
    <property type="term" value="P:positive regulation of neuroblast proliferation"/>
    <property type="evidence" value="ECO:0000316"/>
    <property type="project" value="UniProtKB"/>
</dbReference>
<dbReference type="GO" id="GO:0045944">
    <property type="term" value="P:positive regulation of transcription by RNA polymerase II"/>
    <property type="evidence" value="ECO:0000314"/>
    <property type="project" value="UniProtKB"/>
</dbReference>
<dbReference type="GO" id="GO:0008104">
    <property type="term" value="P:protein localization"/>
    <property type="evidence" value="ECO:0000315"/>
    <property type="project" value="FlyBase"/>
</dbReference>
<dbReference type="GO" id="GO:0007465">
    <property type="term" value="P:R7 cell fate commitment"/>
    <property type="evidence" value="ECO:0000315"/>
    <property type="project" value="FlyBase"/>
</dbReference>
<dbReference type="GO" id="GO:0051090">
    <property type="term" value="P:regulation of DNA-binding transcription factor activity"/>
    <property type="evidence" value="ECO:0000314"/>
    <property type="project" value="UniProtKB"/>
</dbReference>
<dbReference type="GO" id="GO:0010468">
    <property type="term" value="P:regulation of gene expression"/>
    <property type="evidence" value="ECO:0000315"/>
    <property type="project" value="UniProtKB"/>
</dbReference>
<dbReference type="GO" id="GO:1902692">
    <property type="term" value="P:regulation of neuroblast proliferation"/>
    <property type="evidence" value="ECO:0000316"/>
    <property type="project" value="UniProtKB"/>
</dbReference>
<dbReference type="GO" id="GO:0045664">
    <property type="term" value="P:regulation of neuron differentiation"/>
    <property type="evidence" value="ECO:0000315"/>
    <property type="project" value="UniProtKB"/>
</dbReference>
<dbReference type="GO" id="GO:1900180">
    <property type="term" value="P:regulation of protein localization to nucleus"/>
    <property type="evidence" value="ECO:0000315"/>
    <property type="project" value="FlyBase"/>
</dbReference>
<dbReference type="GO" id="GO:0045676">
    <property type="term" value="P:regulation of R7 cell differentiation"/>
    <property type="evidence" value="ECO:0000315"/>
    <property type="project" value="FlyBase"/>
</dbReference>
<dbReference type="GO" id="GO:0006357">
    <property type="term" value="P:regulation of transcription by RNA polymerase II"/>
    <property type="evidence" value="ECO:0000318"/>
    <property type="project" value="GO_Central"/>
</dbReference>
<dbReference type="GO" id="GO:0050909">
    <property type="term" value="P:sensory perception of taste"/>
    <property type="evidence" value="ECO:0000315"/>
    <property type="project" value="FlyBase"/>
</dbReference>
<dbReference type="GO" id="GO:0007416">
    <property type="term" value="P:synapse assembly"/>
    <property type="evidence" value="ECO:0000315"/>
    <property type="project" value="FlyBase"/>
</dbReference>
<dbReference type="FunFam" id="1.10.10.500:FF:000002">
    <property type="entry name" value="Prospero homeobox 3"/>
    <property type="match status" value="1"/>
</dbReference>
<dbReference type="Gene3D" id="1.10.10.500">
    <property type="entry name" value="Homeo-prospero domain"/>
    <property type="match status" value="1"/>
</dbReference>
<dbReference type="InterPro" id="IPR023082">
    <property type="entry name" value="Homeo_prospero_dom"/>
</dbReference>
<dbReference type="InterPro" id="IPR037131">
    <property type="entry name" value="Homeo_prospero_dom_sf"/>
</dbReference>
<dbReference type="InterPro" id="IPR009057">
    <property type="entry name" value="Homeodomain-like_sf"/>
</dbReference>
<dbReference type="InterPro" id="IPR039350">
    <property type="entry name" value="Prospero_homeodomain"/>
</dbReference>
<dbReference type="PANTHER" id="PTHR12198:SF0">
    <property type="entry name" value="HOMEOBOX PROTEIN PROSPERO"/>
    <property type="match status" value="1"/>
</dbReference>
<dbReference type="PANTHER" id="PTHR12198">
    <property type="entry name" value="HOMEOBOX PROTEIN PROSPERO/PROX-1/CEH-26"/>
    <property type="match status" value="1"/>
</dbReference>
<dbReference type="Pfam" id="PF05044">
    <property type="entry name" value="HPD"/>
    <property type="match status" value="1"/>
</dbReference>
<dbReference type="SUPFAM" id="SSF81995">
    <property type="entry name" value="beta-sandwich domain of Sec23/24"/>
    <property type="match status" value="1"/>
</dbReference>
<dbReference type="SUPFAM" id="SSF46689">
    <property type="entry name" value="Homeodomain-like"/>
    <property type="match status" value="1"/>
</dbReference>
<dbReference type="PROSITE" id="PS51818">
    <property type="entry name" value="HOMEO_PROSPERO"/>
    <property type="match status" value="1"/>
</dbReference>
<gene>
    <name type="primary">pros</name>
    <name type="ORF">CG17228</name>
</gene>
<proteinExistence type="evidence at protein level"/>
<protein>
    <recommendedName>
        <fullName>Homeobox protein prospero</fullName>
    </recommendedName>
</protein>
<reference key="1">
    <citation type="journal article" date="1991" name="Cell">
        <title>Prospero is expressed in neuronal precursors and encodes a nuclear protein that is involved in the control of axonal outgrowth in Drosophila.</title>
        <authorList>
            <person name="Vaessin H."/>
            <person name="Grell E."/>
            <person name="Wolff E."/>
            <person name="Bier E."/>
            <person name="Jan L.Y."/>
            <person name="Jan Y.N."/>
        </authorList>
    </citation>
    <scope>NUCLEOTIDE SEQUENCE [MRNA] (ISOFORM M)</scope>
    <scope>FUNCTION</scope>
    <scope>SUBCELLULAR LOCATION</scope>
    <scope>DEVELOPMENTAL STAGE</scope>
    <scope>DISRUPTION PHENOTYPE</scope>
    <source>
        <tissue>Embryo</tissue>
    </source>
</reference>
<reference key="2">
    <citation type="journal article" date="2000" name="Science">
        <title>The genome sequence of Drosophila melanogaster.</title>
        <authorList>
            <person name="Adams M.D."/>
            <person name="Celniker S.E."/>
            <person name="Holt R.A."/>
            <person name="Evans C.A."/>
            <person name="Gocayne J.D."/>
            <person name="Amanatides P.G."/>
            <person name="Scherer S.E."/>
            <person name="Li P.W."/>
            <person name="Hoskins R.A."/>
            <person name="Galle R.F."/>
            <person name="George R.A."/>
            <person name="Lewis S.E."/>
            <person name="Richards S."/>
            <person name="Ashburner M."/>
            <person name="Henderson S.N."/>
            <person name="Sutton G.G."/>
            <person name="Wortman J.R."/>
            <person name="Yandell M.D."/>
            <person name="Zhang Q."/>
            <person name="Chen L.X."/>
            <person name="Brandon R.C."/>
            <person name="Rogers Y.-H.C."/>
            <person name="Blazej R.G."/>
            <person name="Champe M."/>
            <person name="Pfeiffer B.D."/>
            <person name="Wan K.H."/>
            <person name="Doyle C."/>
            <person name="Baxter E.G."/>
            <person name="Helt G."/>
            <person name="Nelson C.R."/>
            <person name="Miklos G.L.G."/>
            <person name="Abril J.F."/>
            <person name="Agbayani A."/>
            <person name="An H.-J."/>
            <person name="Andrews-Pfannkoch C."/>
            <person name="Baldwin D."/>
            <person name="Ballew R.M."/>
            <person name="Basu A."/>
            <person name="Baxendale J."/>
            <person name="Bayraktaroglu L."/>
            <person name="Beasley E.M."/>
            <person name="Beeson K.Y."/>
            <person name="Benos P.V."/>
            <person name="Berman B.P."/>
            <person name="Bhandari D."/>
            <person name="Bolshakov S."/>
            <person name="Borkova D."/>
            <person name="Botchan M.R."/>
            <person name="Bouck J."/>
            <person name="Brokstein P."/>
            <person name="Brottier P."/>
            <person name="Burtis K.C."/>
            <person name="Busam D.A."/>
            <person name="Butler H."/>
            <person name="Cadieu E."/>
            <person name="Center A."/>
            <person name="Chandra I."/>
            <person name="Cherry J.M."/>
            <person name="Cawley S."/>
            <person name="Dahlke C."/>
            <person name="Davenport L.B."/>
            <person name="Davies P."/>
            <person name="de Pablos B."/>
            <person name="Delcher A."/>
            <person name="Deng Z."/>
            <person name="Mays A.D."/>
            <person name="Dew I."/>
            <person name="Dietz S.M."/>
            <person name="Dodson K."/>
            <person name="Doup L.E."/>
            <person name="Downes M."/>
            <person name="Dugan-Rocha S."/>
            <person name="Dunkov B.C."/>
            <person name="Dunn P."/>
            <person name="Durbin K.J."/>
            <person name="Evangelista C.C."/>
            <person name="Ferraz C."/>
            <person name="Ferriera S."/>
            <person name="Fleischmann W."/>
            <person name="Fosler C."/>
            <person name="Gabrielian A.E."/>
            <person name="Garg N.S."/>
            <person name="Gelbart W.M."/>
            <person name="Glasser K."/>
            <person name="Glodek A."/>
            <person name="Gong F."/>
            <person name="Gorrell J.H."/>
            <person name="Gu Z."/>
            <person name="Guan P."/>
            <person name="Harris M."/>
            <person name="Harris N.L."/>
            <person name="Harvey D.A."/>
            <person name="Heiman T.J."/>
            <person name="Hernandez J.R."/>
            <person name="Houck J."/>
            <person name="Hostin D."/>
            <person name="Houston K.A."/>
            <person name="Howland T.J."/>
            <person name="Wei M.-H."/>
            <person name="Ibegwam C."/>
            <person name="Jalali M."/>
            <person name="Kalush F."/>
            <person name="Karpen G.H."/>
            <person name="Ke Z."/>
            <person name="Kennison J.A."/>
            <person name="Ketchum K.A."/>
            <person name="Kimmel B.E."/>
            <person name="Kodira C.D."/>
            <person name="Kraft C.L."/>
            <person name="Kravitz S."/>
            <person name="Kulp D."/>
            <person name="Lai Z."/>
            <person name="Lasko P."/>
            <person name="Lei Y."/>
            <person name="Levitsky A.A."/>
            <person name="Li J.H."/>
            <person name="Li Z."/>
            <person name="Liang Y."/>
            <person name="Lin X."/>
            <person name="Liu X."/>
            <person name="Mattei B."/>
            <person name="McIntosh T.C."/>
            <person name="McLeod M.P."/>
            <person name="McPherson D."/>
            <person name="Merkulov G."/>
            <person name="Milshina N.V."/>
            <person name="Mobarry C."/>
            <person name="Morris J."/>
            <person name="Moshrefi A."/>
            <person name="Mount S.M."/>
            <person name="Moy M."/>
            <person name="Murphy B."/>
            <person name="Murphy L."/>
            <person name="Muzny D.M."/>
            <person name="Nelson D.L."/>
            <person name="Nelson D.R."/>
            <person name="Nelson K.A."/>
            <person name="Nixon K."/>
            <person name="Nusskern D.R."/>
            <person name="Pacleb J.M."/>
            <person name="Palazzolo M."/>
            <person name="Pittman G.S."/>
            <person name="Pan S."/>
            <person name="Pollard J."/>
            <person name="Puri V."/>
            <person name="Reese M.G."/>
            <person name="Reinert K."/>
            <person name="Remington K."/>
            <person name="Saunders R.D.C."/>
            <person name="Scheeler F."/>
            <person name="Shen H."/>
            <person name="Shue B.C."/>
            <person name="Siden-Kiamos I."/>
            <person name="Simpson M."/>
            <person name="Skupski M.P."/>
            <person name="Smith T.J."/>
            <person name="Spier E."/>
            <person name="Spradling A.C."/>
            <person name="Stapleton M."/>
            <person name="Strong R."/>
            <person name="Sun E."/>
            <person name="Svirskas R."/>
            <person name="Tector C."/>
            <person name="Turner R."/>
            <person name="Venter E."/>
            <person name="Wang A.H."/>
            <person name="Wang X."/>
            <person name="Wang Z.-Y."/>
            <person name="Wassarman D.A."/>
            <person name="Weinstock G.M."/>
            <person name="Weissenbach J."/>
            <person name="Williams S.M."/>
            <person name="Woodage T."/>
            <person name="Worley K.C."/>
            <person name="Wu D."/>
            <person name="Yang S."/>
            <person name="Yao Q.A."/>
            <person name="Ye J."/>
            <person name="Yeh R.-F."/>
            <person name="Zaveri J.S."/>
            <person name="Zhan M."/>
            <person name="Zhang G."/>
            <person name="Zhao Q."/>
            <person name="Zheng L."/>
            <person name="Zheng X.H."/>
            <person name="Zhong F.N."/>
            <person name="Zhong W."/>
            <person name="Zhou X."/>
            <person name="Zhu S.C."/>
            <person name="Zhu X."/>
            <person name="Smith H.O."/>
            <person name="Gibbs R.A."/>
            <person name="Myers E.W."/>
            <person name="Rubin G.M."/>
            <person name="Venter J.C."/>
        </authorList>
    </citation>
    <scope>NUCLEOTIDE SEQUENCE [LARGE SCALE GENOMIC DNA]</scope>
    <source>
        <strain>Berkeley</strain>
    </source>
</reference>
<reference key="3">
    <citation type="journal article" date="2002" name="Genome Biol.">
        <title>Annotation of the Drosophila melanogaster euchromatic genome: a systematic review.</title>
        <authorList>
            <person name="Misra S."/>
            <person name="Crosby M.A."/>
            <person name="Mungall C.J."/>
            <person name="Matthews B.B."/>
            <person name="Campbell K.S."/>
            <person name="Hradecky P."/>
            <person name="Huang Y."/>
            <person name="Kaminker J.S."/>
            <person name="Millburn G.H."/>
            <person name="Prochnik S.E."/>
            <person name="Smith C.D."/>
            <person name="Tupy J.L."/>
            <person name="Whitfield E.J."/>
            <person name="Bayraktaroglu L."/>
            <person name="Berman B.P."/>
            <person name="Bettencourt B.R."/>
            <person name="Celniker S.E."/>
            <person name="de Grey A.D.N.J."/>
            <person name="Drysdale R.A."/>
            <person name="Harris N.L."/>
            <person name="Richter J."/>
            <person name="Russo S."/>
            <person name="Schroeder A.J."/>
            <person name="Shu S.Q."/>
            <person name="Stapleton M."/>
            <person name="Yamada C."/>
            <person name="Ashburner M."/>
            <person name="Gelbart W.M."/>
            <person name="Rubin G.M."/>
            <person name="Lewis S.E."/>
        </authorList>
    </citation>
    <scope>GENOME REANNOTATION</scope>
    <scope>ALTERNATIVE SPLICING</scope>
    <source>
        <strain>Berkeley</strain>
    </source>
</reference>
<reference key="4">
    <citation type="journal article" date="1991" name="Development Suppl.">
        <title>The prospero gene encodes a divergent homeodomain protein that controls neuronal identity in Drosophila.</title>
        <authorList>
            <person name="Chu-Lagraff Q."/>
            <person name="Wright D.M."/>
            <person name="McNeil L.K."/>
            <person name="Doe C.Q."/>
        </authorList>
    </citation>
    <scope>NUCLEOTIDE SEQUENCE [MRNA] OF 201-1703 (ISOFORM M)</scope>
    <scope>FUNCTION</scope>
    <scope>SUBCELLULAR LOCATION</scope>
    <scope>DEVELOPMENTAL STAGE</scope>
    <scope>DISRUPTION PHENOTYPE</scope>
    <source>
        <tissue>Embryo</tissue>
    </source>
</reference>
<reference key="5">
    <citation type="journal article" date="1992" name="Biochem. Biophys. Res. Commun.">
        <title>Cloning of the Drosophila prospero gene and its expression in ganglion mother cells.</title>
        <authorList>
            <person name="Matsuzaki F."/>
            <person name="Koizumi K."/>
            <person name="Hama C."/>
            <person name="Yoshioka T."/>
            <person name="Nabeshima Y."/>
        </authorList>
    </citation>
    <scope>NUCLEOTIDE SEQUENCE [MRNA] OF 201-1703 (ISOFORM M)</scope>
    <scope>FUNCTION</scope>
    <scope>SUBCELLULAR LOCATION</scope>
    <scope>DEVELOPMENTAL STAGE</scope>
    <source>
        <strain>Canton-S</strain>
    </source>
</reference>
<reference key="6">
    <citation type="submission" date="2006-11" db="EMBL/GenBank/DDBJ databases">
        <authorList>
            <person name="Stapleton M."/>
            <person name="Carlson J.W."/>
            <person name="Frise E."/>
            <person name="Kapadia B."/>
            <person name="Park S."/>
            <person name="Wan K.H."/>
            <person name="Yu C."/>
            <person name="Celniker S.E."/>
        </authorList>
    </citation>
    <scope>NUCLEOTIDE SEQUENCE [LARGE SCALE MRNA] OF 205-1703 (ISOFORM H)</scope>
    <source>
        <strain>Berkeley</strain>
    </source>
</reference>
<reference key="7">
    <citation type="journal article" date="2000" name="Cell">
        <title>Overlapping activators and repressors delimit transcriptional response to receptor tyrosine kinase signals in the Drosophila eye.</title>
        <authorList>
            <person name="Xu C."/>
            <person name="Kauffmann R.C."/>
            <person name="Zhang J."/>
            <person name="Kladny S."/>
            <person name="Carthew R.W."/>
        </authorList>
    </citation>
    <scope>NUCLEOTIDE SEQUENCE [GENOMIC DNA] OF 301-1703</scope>
    <scope>FUNCTION</scope>
</reference>
<reference key="8">
    <citation type="journal article" date="2002" name="Genome Biol.">
        <title>A Drosophila full-length cDNA resource.</title>
        <authorList>
            <person name="Stapleton M."/>
            <person name="Carlson J.W."/>
            <person name="Brokstein P."/>
            <person name="Yu C."/>
            <person name="Champe M."/>
            <person name="George R.A."/>
            <person name="Guarin H."/>
            <person name="Kronmiller B."/>
            <person name="Pacleb J.M."/>
            <person name="Park S."/>
            <person name="Wan K.H."/>
            <person name="Rubin G.M."/>
            <person name="Celniker S.E."/>
        </authorList>
    </citation>
    <scope>NUCLEOTIDE SEQUENCE [LARGE SCALE MRNA] OF 1061-1703 (ISOFORM I)</scope>
    <source>
        <strain>Berkeley</strain>
        <tissue>Head</tissue>
    </source>
</reference>
<reference key="9">
    <citation type="journal article" date="1994" name="Trends Biochem. Sci.">
        <title>A Caenorhabditis elegans prospero homologue defines a novel domain.</title>
        <authorList>
            <person name="Buerglin T.R."/>
        </authorList>
    </citation>
    <scope>SIMILARITY TO C.ELEGANS CEH-26</scope>
</reference>
<reference key="10">
    <citation type="journal article" date="1997" name="Proc. Natl. Acad. Sci. U.S.A.">
        <title>Prospero is a panneural transcription factor that modulates homeodomain protein activity.</title>
        <authorList>
            <person name="Hassan B."/>
            <person name="Li L."/>
            <person name="Bremer K.A."/>
            <person name="Chang W."/>
            <person name="Pinsonneault J."/>
            <person name="Vaessin H."/>
        </authorList>
    </citation>
    <scope>FUNCTION</scope>
</reference>
<reference key="11">
    <citation type="journal article" date="2006" name="Cell">
        <title>Asymmetric segregation of the tumor suppressor brat regulates self-renewal in Drosophila neural stem cells.</title>
        <authorList>
            <person name="Betschinger J."/>
            <person name="Mechtler K."/>
            <person name="Knoblich J.A."/>
        </authorList>
    </citation>
    <scope>FUNCTION</scope>
    <scope>SUBCELLULAR LOCATION</scope>
</reference>
<reference key="12">
    <citation type="journal article" date="2008" name="Dev. Cell">
        <title>The tumor suppressors Brat and Numb regulate transit-amplifying neuroblast lineages in Drosophila.</title>
        <authorList>
            <person name="Bowman S.K."/>
            <person name="Rolland V."/>
            <person name="Betschinger J."/>
            <person name="Kinsey K.A."/>
            <person name="Emery G."/>
            <person name="Knoblich J.A."/>
        </authorList>
    </citation>
    <scope>FUNCTION</scope>
    <scope>SUBCELLULAR LOCATION</scope>
</reference>
<reference key="13">
    <citation type="journal article" date="2008" name="J. Proteome Res.">
        <title>Phosphoproteome analysis of Drosophila melanogaster embryos.</title>
        <authorList>
            <person name="Zhai B."/>
            <person name="Villen J."/>
            <person name="Beausoleil S.A."/>
            <person name="Mintseris J."/>
            <person name="Gygi S.P."/>
        </authorList>
    </citation>
    <scope>PHOSPHORYLATION [LARGE SCALE ANALYSIS] AT SER-479; SER-482; SER-485; SER-497; SER-651 AND SER-654</scope>
    <scope>IDENTIFICATION BY MASS SPECTROMETRY</scope>
    <source>
        <tissue>Embryo</tissue>
    </source>
</reference>
<reference key="14">
    <citation type="journal article" date="2010" name="Dev. Cell">
        <title>dFezf/Earmuff maintains the restricted developmental potential of intermediate neural progenitors in Drosophila.</title>
        <authorList>
            <person name="Weng M."/>
            <person name="Golden K.L."/>
            <person name="Lee C.Y."/>
        </authorList>
    </citation>
    <scope>FUNCTION</scope>
    <scope>SUBCELLULAR LOCATION</scope>
    <scope>DEVELOPMENTAL STAGE</scope>
</reference>
<reference key="15">
    <citation type="journal article" date="2012" name="PLoS ONE">
        <title>The bHLH repressor Deadpan regulates the self-renewal and specification of Drosophila larval neural stem cells independently of Notch.</title>
        <authorList>
            <person name="Zhu S."/>
            <person name="Wildonger J."/>
            <person name="Barshow S."/>
            <person name="Younger S."/>
            <person name="Huang Y."/>
            <person name="Lee T."/>
        </authorList>
    </citation>
    <scope>FUNCTION</scope>
    <scope>SUBCELLULAR LOCATION</scope>
</reference>
<reference key="16">
    <citation type="journal article" date="2016" name="Development">
        <title>The Ets protein Pointed prevents both premature differentiation and dedifferentiation of Drosophila intermediate neural progenitors.</title>
        <authorList>
            <person name="Xie Y."/>
            <person name="Li X."/>
            <person name="Deng X."/>
            <person name="Hou Y."/>
            <person name="O'Hara K."/>
            <person name="Urso A."/>
            <person name="Peng Y."/>
            <person name="Chen L."/>
            <person name="Zhu S."/>
        </authorList>
    </citation>
    <scope>FUNCTION</scope>
    <scope>DEVELOPMENTAL STAGE</scope>
</reference>
<reference key="17">
    <citation type="journal article" date="2002" name="Structure">
        <title>Structure of the DNA binding region of prospero reveals a novel homeo-prospero domain.</title>
        <authorList>
            <person name="Ryter J.M."/>
            <person name="Doe C.Q."/>
            <person name="Matthews B.W."/>
        </authorList>
    </citation>
    <scope>X-RAY CRYSTALLOGRAPHY (2.05 ANGSTROMS) OF 1545-1696</scope>
    <scope>FUNCTION</scope>
    <scope>DOMAIN</scope>
</reference>
<reference key="18">
    <citation type="journal article" date="2005" name="Structure">
        <title>Structural basis of Prospero-DNA interaction: implications for transcription regulation in developing cells.</title>
        <authorList>
            <person name="Yousef M.S."/>
            <person name="Matthews B.W."/>
        </authorList>
    </citation>
    <scope>X-RAY CRYSTALLOGRAPHY (2.8 ANGSTROMS) OF 1541-1703</scope>
    <scope>FUNCTION</scope>
    <scope>DOMAIN</scope>
</reference>
<name>PROS_DROME</name>
<accession>P29617</accession>
<accession>A0A0B4K660</accession>
<accession>Q6AWI5</accession>
<accession>Q95SP0</accession>
<accession>Q9U6A2</accession>
<accession>Q9VGP8</accession>
<organism>
    <name type="scientific">Drosophila melanogaster</name>
    <name type="common">Fruit fly</name>
    <dbReference type="NCBI Taxonomy" id="7227"/>
    <lineage>
        <taxon>Eukaryota</taxon>
        <taxon>Metazoa</taxon>
        <taxon>Ecdysozoa</taxon>
        <taxon>Arthropoda</taxon>
        <taxon>Hexapoda</taxon>
        <taxon>Insecta</taxon>
        <taxon>Pterygota</taxon>
        <taxon>Neoptera</taxon>
        <taxon>Endopterygota</taxon>
        <taxon>Diptera</taxon>
        <taxon>Brachycera</taxon>
        <taxon>Muscomorpha</taxon>
        <taxon>Ephydroidea</taxon>
        <taxon>Drosophilidae</taxon>
        <taxon>Drosophila</taxon>
        <taxon>Sophophora</taxon>
    </lineage>
</organism>
<sequence>MMSSEEYEADCFGLYSDENNVLLKANEPETTAATKQQHQPQFQQQQQQQQQQQQHHHQHQQPPPSSNGHTSPIPSQVNGDGSAANCGESGKTNTNTGSHSHSNSGNTNTDADKEQEREKAKEKANEEESEDSDDDVVVVLEGCEGNASSSSSSSNSNSNASSNNHKAAATTTTTATTANHCNRSGGSSRSHRSARSSRQISQSTAVGKTTTCAAKKPTAAQATTTTAKNSNSNSNVNVNVNVNSNGSGNGNANSKVNRRSRQRSLSKDINNQPASSNSNSNSSNNSSNSNGGATATAAGFMSSAAAAAAGAAGGGALFQPQSVSTANSSSSNNNNSSTPAALATHSPTSNSPVSGASSASSLLTAAFGNLFGGSSAKMLNELFGRQMKQAQDATSGLPQSLDNAMLAAAMETATSAELLIGSLNSTSKLLQQQHNNNSIAPANSTPMSNGTNASISPGSAHSSSHSHQGVSPKGSRRVSACSDRSLEAAAADVAGGSPPRAASVSSLNGGASSGEQHQSQLQHDLVAHHMLRNILQGKKELMQLDQELRTAMQQQQQQLQEKEQLHSKLNNNNNNNIAATANNNNNTTMESINLIDDSEMADIKIKSEPQTAPQPQQSPHGSSHSSRSGSGSGSHSSMASDGSLRRKSSDSLDSHGAQDDAQDEEDAAPTGQRSESRAPEEPQLPTKKESVDDMLDEVELLGLHSRGSDMDSLASPSHSDMMLLDKDDVLDEDDDDDCVEQKTSGSGCLKKPGMDLKRARVENIVSGMRCSPSSGLAQAGQLQVNGCKKRKLYQPQQHAMERYVAAAAGLNFGLNLQSMMLDQEDSESNELESPQIQQKRVEKNALKSQLRSMQEQLAEMQQKYVQLCSRMEQESECQELDQDQDVEQEQEPDNGSSDHIELSPSPTLTGDGDVSPNHKEETGQERPGSSSPSPSPLKPKTSLGESSDSGANMLSQMMSKMMSGKLHNPLVGVGHPALPQGFPPLLQHMGDMSHAAAMYQQFFFEQEARMAKEAAEQQQQQQQQQQQQQQQQQQEQQRRFEQEQQEQQRRKEEQQQQIQRQQQHLQQLQQQQMEQQHVATAAPRPQMHHPAPARLPTRMGGAAGHTALKSELSEKFQMLRANNNSSMMRMSGTDLEGLADVLKSEITTSLSALVDTIVTRFVHQRRLFSKQADSVTAAAEQLNKDLLLASQILDRKSPRTKVADRPQNGPTPATQSAAAMFQAPKTPQGMNPVAAAALYNSMTGPFCLPPDQQQQQQTAQQQQSAQQQQQSSQQTQQQLEQNEALSLVVTPKKKRHKVTDTRITPRTVSRILAQDGVVPPTGGPPSTPQQQQQQQQQQQQQQQQQQQQASNGGNSNATPAQSPTRSSGGAAYHPQPPPPPPPMMPVSLPTSVAIPNPSLHESKVFSPYSPFFNPHAAAGQATAAQLHQHHQQHHPHHQSMQLSSSPPGSLGALMDSRDSPPLPHPPSMLHPALLAAAHHGGSPDYKTCLRAVMDAQDRQSECNSADMQFDGMAPTISFYKQMQLKTEHQESLMAKHCESLTPLHSSTLTPMHLRKAKLMFFWVRYPSSAVLKMYFPDIKFNKNNTAQLVKWFSNFREFYYIQMEKYARQAVTEGIKTPDDLLIAGDSELYRVLNLHYNRNNHIEVPQNFRFVVESTLREFFRAIQGGKDTEQSWKKSIYKIISRMDDPVPEYFKSPNFLEQLE</sequence>